<dbReference type="EMBL" id="GU293125">
    <property type="protein sequence ID" value="ADB56941.1"/>
    <property type="molecule type" value="Genomic_DNA"/>
</dbReference>
<dbReference type="ArachnoServer" id="AS001665">
    <property type="toxin name" value="U11-theraphotoxin-Hhn1b"/>
</dbReference>
<dbReference type="GO" id="GO:0005576">
    <property type="term" value="C:extracellular region"/>
    <property type="evidence" value="ECO:0007669"/>
    <property type="project" value="UniProtKB-SubCell"/>
</dbReference>
<dbReference type="GO" id="GO:0019871">
    <property type="term" value="F:sodium channel inhibitor activity"/>
    <property type="evidence" value="ECO:0007669"/>
    <property type="project" value="InterPro"/>
</dbReference>
<dbReference type="GO" id="GO:0090729">
    <property type="term" value="F:toxin activity"/>
    <property type="evidence" value="ECO:0007669"/>
    <property type="project" value="UniProtKB-KW"/>
</dbReference>
<dbReference type="InterPro" id="IPR012627">
    <property type="entry name" value="Toxin_22"/>
</dbReference>
<dbReference type="Pfam" id="PF08092">
    <property type="entry name" value="Toxin_22"/>
    <property type="match status" value="1"/>
</dbReference>
<feature type="signal peptide" evidence="2">
    <location>
        <begin position="1"/>
        <end position="21"/>
    </location>
</feature>
<feature type="propeptide" id="PRO_0000400917" evidence="1">
    <location>
        <begin position="22"/>
        <end position="74"/>
    </location>
</feature>
<feature type="peptide" id="PRO_0000400918" description="U11-theraphotoxin-Hhn1b">
    <location>
        <begin position="75"/>
        <end position="116"/>
    </location>
</feature>
<feature type="region of interest" description="Disordered" evidence="3">
    <location>
        <begin position="61"/>
        <end position="83"/>
    </location>
</feature>
<feature type="disulfide bond" evidence="1">
    <location>
        <begin position="75"/>
        <end position="90"/>
    </location>
</feature>
<feature type="disulfide bond" evidence="1">
    <location>
        <begin position="82"/>
        <end position="95"/>
    </location>
</feature>
<feature type="disulfide bond" evidence="1">
    <location>
        <begin position="89"/>
        <end position="110"/>
    </location>
</feature>
<accession>D2Y2P8</accession>
<name>H16B2_CYRHA</name>
<sequence>MNTVRVAFLLVFVLAVSLGQADKDENRMEMQEKTEQGKSYLDFAENLLLQKLEELEAKLLEEDSEESRNSRQKRCIGEGVPCDENDPRCCSGLVCLKPTLHGIWYKSYYCYKKRSA</sequence>
<keyword id="KW-1015">Disulfide bond</keyword>
<keyword id="KW-0872">Ion channel impairing toxin</keyword>
<keyword id="KW-0960">Knottin</keyword>
<keyword id="KW-0964">Secreted</keyword>
<keyword id="KW-0732">Signal</keyword>
<keyword id="KW-0800">Toxin</keyword>
<organism>
    <name type="scientific">Cyriopagopus hainanus</name>
    <name type="common">Chinese bird spider</name>
    <name type="synonym">Haplopelma hainanum</name>
    <dbReference type="NCBI Taxonomy" id="209901"/>
    <lineage>
        <taxon>Eukaryota</taxon>
        <taxon>Metazoa</taxon>
        <taxon>Ecdysozoa</taxon>
        <taxon>Arthropoda</taxon>
        <taxon>Chelicerata</taxon>
        <taxon>Arachnida</taxon>
        <taxon>Araneae</taxon>
        <taxon>Mygalomorphae</taxon>
        <taxon>Theraphosidae</taxon>
        <taxon>Haplopelma</taxon>
    </lineage>
</organism>
<reference key="1">
    <citation type="journal article" date="2010" name="J. Proteome Res.">
        <title>Molecular diversification of peptide toxins from the tarantula Haplopelma hainanum (Ornithoctonus hainana) venom based on transcriptomic, peptidomic, and genomic analyses.</title>
        <authorList>
            <person name="Tang X."/>
            <person name="Zhang Y."/>
            <person name="Hu W."/>
            <person name="Xu D."/>
            <person name="Tao H."/>
            <person name="Yang X."/>
            <person name="Li Y."/>
            <person name="Jiang L."/>
            <person name="Liang S."/>
        </authorList>
    </citation>
    <scope>NUCLEOTIDE SEQUENCE [LARGE SCALE GENOMIC DNA]</scope>
    <source>
        <tissue>Venom gland</tissue>
    </source>
</reference>
<proteinExistence type="inferred from homology"/>
<evidence type="ECO:0000250" key="1"/>
<evidence type="ECO:0000255" key="2"/>
<evidence type="ECO:0000256" key="3">
    <source>
        <dbReference type="SAM" id="MobiDB-lite"/>
    </source>
</evidence>
<evidence type="ECO:0000305" key="4"/>
<comment type="function">
    <text evidence="1">Probable ion channel inhibitor.</text>
</comment>
<comment type="subcellular location">
    <subcellularLocation>
        <location evidence="1">Secreted</location>
    </subcellularLocation>
</comment>
<comment type="tissue specificity">
    <text>Expressed by the venom gland.</text>
</comment>
<comment type="domain">
    <text evidence="1">The presence of a 'disulfide through disulfide knot' structurally defines this protein as a knottin.</text>
</comment>
<comment type="similarity">
    <text evidence="4">Belongs to the neurotoxin 14 (magi-1) family. 01 (HNTX-16) subfamily.</text>
</comment>
<protein>
    <recommendedName>
        <fullName>U11-theraphotoxin-Hhn1b</fullName>
        <shortName>U11-TRTX-Hhn1b</shortName>
    </recommendedName>
    <alternativeName>
        <fullName>Hainantoxin-XVI-2.2</fullName>
        <shortName>HNTX-XVI-2.2</shortName>
    </alternativeName>
</protein>